<proteinExistence type="predicted"/>
<reference key="1">
    <citation type="journal article" date="1998" name="Nature">
        <title>The complete genome of the hyperthermophilic bacterium Aquifex aeolicus.</title>
        <authorList>
            <person name="Deckert G."/>
            <person name="Warren P.V."/>
            <person name="Gaasterland T."/>
            <person name="Young W.G."/>
            <person name="Lenox A.L."/>
            <person name="Graham D.E."/>
            <person name="Overbeek R."/>
            <person name="Snead M.A."/>
            <person name="Keller M."/>
            <person name="Aujay M."/>
            <person name="Huber R."/>
            <person name="Feldman R.A."/>
            <person name="Short J.M."/>
            <person name="Olsen G.J."/>
            <person name="Swanson R.V."/>
        </authorList>
    </citation>
    <scope>NUCLEOTIDE SEQUENCE [LARGE SCALE GENOMIC DNA]</scope>
    <source>
        <strain>VF5</strain>
    </source>
</reference>
<dbReference type="EMBL" id="AE000657">
    <property type="protein sequence ID" value="AAC06532.1"/>
    <property type="molecule type" value="Genomic_DNA"/>
</dbReference>
<dbReference type="PIR" id="C70318">
    <property type="entry name" value="C70318"/>
</dbReference>
<dbReference type="RefSeq" id="NP_213135.1">
    <property type="nucleotide sequence ID" value="NC_000918.1"/>
</dbReference>
<dbReference type="RefSeq" id="WP_010880073.1">
    <property type="nucleotide sequence ID" value="NC_000918.1"/>
</dbReference>
<dbReference type="STRING" id="224324.aq_194"/>
<dbReference type="EnsemblBacteria" id="AAC06532">
    <property type="protein sequence ID" value="AAC06532"/>
    <property type="gene ID" value="aq_194"/>
</dbReference>
<dbReference type="KEGG" id="aae:aq_194"/>
<dbReference type="HOGENOM" id="CLU_1852471_0_0_0"/>
<dbReference type="InParanoid" id="O66575"/>
<dbReference type="OrthoDB" id="14003at2"/>
<dbReference type="Proteomes" id="UP000000798">
    <property type="component" value="Chromosome"/>
</dbReference>
<accession>O66575</accession>
<protein>
    <recommendedName>
        <fullName>Uncharacterized protein aq_194</fullName>
    </recommendedName>
</protein>
<sequence length="154" mass="18089">MEFFFFIDVYADRELVDYYIVTFKLDDLSSVELTGSQGKYYIRGIRDWEKFKEEAYDITLYELGDEVDRFKDIETALREAYRIAIGEAVRRGAKNIVPAIGFGNPPPEVVERVYPEELKFEKFPEDLDAFLDRIVKEVSLETTERSKDDDEIPF</sequence>
<keyword id="KW-1185">Reference proteome</keyword>
<feature type="chain" id="PRO_0000186845" description="Uncharacterized protein aq_194">
    <location>
        <begin position="1"/>
        <end position="154"/>
    </location>
</feature>
<organism>
    <name type="scientific">Aquifex aeolicus (strain VF5)</name>
    <dbReference type="NCBI Taxonomy" id="224324"/>
    <lineage>
        <taxon>Bacteria</taxon>
        <taxon>Pseudomonadati</taxon>
        <taxon>Aquificota</taxon>
        <taxon>Aquificia</taxon>
        <taxon>Aquificales</taxon>
        <taxon>Aquificaceae</taxon>
        <taxon>Aquifex</taxon>
    </lineage>
</organism>
<name>Y194_AQUAE</name>
<gene>
    <name type="ordered locus">aq_194</name>
</gene>